<keyword id="KW-0143">Chaperone</keyword>
<keyword id="KW-0963">Cytoplasm</keyword>
<keyword id="KW-1185">Reference proteome</keyword>
<feature type="chain" id="PRO_0000174687" description="Co-chaperonin GroES">
    <location>
        <begin position="1"/>
        <end position="122"/>
    </location>
</feature>
<accession>O67942</accession>
<dbReference type="EMBL" id="AE000657">
    <property type="protein sequence ID" value="AAC07898.1"/>
    <property type="molecule type" value="Genomic_DNA"/>
</dbReference>
<dbReference type="PIR" id="B70489">
    <property type="entry name" value="B70489"/>
</dbReference>
<dbReference type="RefSeq" id="NP_214511.1">
    <property type="nucleotide sequence ID" value="NC_000918.1"/>
</dbReference>
<dbReference type="SMR" id="O67942"/>
<dbReference type="FunCoup" id="O67942">
    <property type="interactions" value="451"/>
</dbReference>
<dbReference type="STRING" id="224324.aq_2199"/>
<dbReference type="EnsemblBacteria" id="AAC07898">
    <property type="protein sequence ID" value="AAC07898"/>
    <property type="gene ID" value="aq_2199"/>
</dbReference>
<dbReference type="KEGG" id="aae:aq_2199"/>
<dbReference type="PATRIC" id="fig|224324.8.peg.1702"/>
<dbReference type="eggNOG" id="COG0234">
    <property type="taxonomic scope" value="Bacteria"/>
</dbReference>
<dbReference type="HOGENOM" id="CLU_132825_2_0_0"/>
<dbReference type="InParanoid" id="O67942"/>
<dbReference type="OrthoDB" id="9806791at2"/>
<dbReference type="Proteomes" id="UP000000798">
    <property type="component" value="Chromosome"/>
</dbReference>
<dbReference type="GO" id="GO:0005737">
    <property type="term" value="C:cytoplasm"/>
    <property type="evidence" value="ECO:0007669"/>
    <property type="project" value="UniProtKB-SubCell"/>
</dbReference>
<dbReference type="GO" id="GO:0005524">
    <property type="term" value="F:ATP binding"/>
    <property type="evidence" value="ECO:0007669"/>
    <property type="project" value="InterPro"/>
</dbReference>
<dbReference type="GO" id="GO:0046872">
    <property type="term" value="F:metal ion binding"/>
    <property type="evidence" value="ECO:0000318"/>
    <property type="project" value="GO_Central"/>
</dbReference>
<dbReference type="GO" id="GO:0044183">
    <property type="term" value="F:protein folding chaperone"/>
    <property type="evidence" value="ECO:0007669"/>
    <property type="project" value="InterPro"/>
</dbReference>
<dbReference type="GO" id="GO:0051087">
    <property type="term" value="F:protein-folding chaperone binding"/>
    <property type="evidence" value="ECO:0000318"/>
    <property type="project" value="GO_Central"/>
</dbReference>
<dbReference type="GO" id="GO:0051082">
    <property type="term" value="F:unfolded protein binding"/>
    <property type="evidence" value="ECO:0000318"/>
    <property type="project" value="GO_Central"/>
</dbReference>
<dbReference type="GO" id="GO:0051085">
    <property type="term" value="P:chaperone cofactor-dependent protein refolding"/>
    <property type="evidence" value="ECO:0000318"/>
    <property type="project" value="GO_Central"/>
</dbReference>
<dbReference type="CDD" id="cd00320">
    <property type="entry name" value="cpn10"/>
    <property type="match status" value="1"/>
</dbReference>
<dbReference type="FunFam" id="2.30.33.40:FF:000001">
    <property type="entry name" value="10 kDa chaperonin"/>
    <property type="match status" value="1"/>
</dbReference>
<dbReference type="Gene3D" id="2.30.33.40">
    <property type="entry name" value="GroES chaperonin"/>
    <property type="match status" value="1"/>
</dbReference>
<dbReference type="HAMAP" id="MF_00580">
    <property type="entry name" value="CH10"/>
    <property type="match status" value="1"/>
</dbReference>
<dbReference type="InterPro" id="IPR020818">
    <property type="entry name" value="Chaperonin_GroES"/>
</dbReference>
<dbReference type="InterPro" id="IPR037124">
    <property type="entry name" value="Chaperonin_GroES_sf"/>
</dbReference>
<dbReference type="InterPro" id="IPR011032">
    <property type="entry name" value="GroES-like_sf"/>
</dbReference>
<dbReference type="NCBIfam" id="NF001527">
    <property type="entry name" value="PRK00364.1-2"/>
    <property type="match status" value="1"/>
</dbReference>
<dbReference type="NCBIfam" id="NF001531">
    <property type="entry name" value="PRK00364.2-2"/>
    <property type="match status" value="1"/>
</dbReference>
<dbReference type="NCBIfam" id="NF001533">
    <property type="entry name" value="PRK00364.2-4"/>
    <property type="match status" value="1"/>
</dbReference>
<dbReference type="NCBIfam" id="NF001534">
    <property type="entry name" value="PRK00364.2-5"/>
    <property type="match status" value="1"/>
</dbReference>
<dbReference type="PANTHER" id="PTHR10772">
    <property type="entry name" value="10 KDA HEAT SHOCK PROTEIN"/>
    <property type="match status" value="1"/>
</dbReference>
<dbReference type="PANTHER" id="PTHR10772:SF58">
    <property type="entry name" value="CO-CHAPERONIN GROES"/>
    <property type="match status" value="1"/>
</dbReference>
<dbReference type="Pfam" id="PF00166">
    <property type="entry name" value="Cpn10"/>
    <property type="match status" value="1"/>
</dbReference>
<dbReference type="PRINTS" id="PR00297">
    <property type="entry name" value="CHAPERONIN10"/>
</dbReference>
<dbReference type="SMART" id="SM00883">
    <property type="entry name" value="Cpn10"/>
    <property type="match status" value="1"/>
</dbReference>
<dbReference type="SUPFAM" id="SSF50129">
    <property type="entry name" value="GroES-like"/>
    <property type="match status" value="1"/>
</dbReference>
<proteinExistence type="inferred from homology"/>
<evidence type="ECO:0000255" key="1">
    <source>
        <dbReference type="HAMAP-Rule" id="MF_00580"/>
    </source>
</evidence>
<comment type="function">
    <text evidence="1">Together with the chaperonin GroEL, plays an essential role in assisting protein folding. The GroEL-GroES system forms a nano-cage that allows encapsulation of the non-native substrate proteins and provides a physical environment optimized to promote and accelerate protein folding. GroES binds to the apical surface of the GroEL ring, thereby capping the opening of the GroEL channel.</text>
</comment>
<comment type="subunit">
    <text evidence="1">Heptamer of 7 subunits arranged in a ring. Interacts with the chaperonin GroEL.</text>
</comment>
<comment type="subcellular location">
    <subcellularLocation>
        <location evidence="1">Cytoplasm</location>
    </subcellularLocation>
</comment>
<comment type="similarity">
    <text evidence="1">Belongs to the GroES chaperonin family.</text>
</comment>
<sequence>MKLRPLYDKIVVERLEEKEEKTPSGIIIPDTAKEKPQLGKVVAVGPGKLLDNGELKPLSVKEGDVVLFNKYAGNEVEIEGKIYLVMSEDEVLAVVEDYSSLIGGEVRWQQRQLSTTRKQGQN</sequence>
<protein>
    <recommendedName>
        <fullName evidence="1">Co-chaperonin GroES</fullName>
    </recommendedName>
    <alternativeName>
        <fullName evidence="1">10 kDa chaperonin</fullName>
    </alternativeName>
    <alternativeName>
        <fullName evidence="1">Chaperonin-10</fullName>
        <shortName evidence="1">Cpn10</shortName>
    </alternativeName>
</protein>
<name>CH10_AQUAE</name>
<gene>
    <name evidence="1" type="primary">groES</name>
    <name evidence="1" type="synonym">groS</name>
    <name type="synonym">mopB</name>
    <name type="ordered locus">aq_2199</name>
</gene>
<organism>
    <name type="scientific">Aquifex aeolicus (strain VF5)</name>
    <dbReference type="NCBI Taxonomy" id="224324"/>
    <lineage>
        <taxon>Bacteria</taxon>
        <taxon>Pseudomonadati</taxon>
        <taxon>Aquificota</taxon>
        <taxon>Aquificia</taxon>
        <taxon>Aquificales</taxon>
        <taxon>Aquificaceae</taxon>
        <taxon>Aquifex</taxon>
    </lineage>
</organism>
<reference key="1">
    <citation type="journal article" date="1998" name="Nature">
        <title>The complete genome of the hyperthermophilic bacterium Aquifex aeolicus.</title>
        <authorList>
            <person name="Deckert G."/>
            <person name="Warren P.V."/>
            <person name="Gaasterland T."/>
            <person name="Young W.G."/>
            <person name="Lenox A.L."/>
            <person name="Graham D.E."/>
            <person name="Overbeek R."/>
            <person name="Snead M.A."/>
            <person name="Keller M."/>
            <person name="Aujay M."/>
            <person name="Huber R."/>
            <person name="Feldman R.A."/>
            <person name="Short J.M."/>
            <person name="Olsen G.J."/>
            <person name="Swanson R.V."/>
        </authorList>
    </citation>
    <scope>NUCLEOTIDE SEQUENCE [LARGE SCALE GENOMIC DNA]</scope>
    <source>
        <strain>VF5</strain>
    </source>
</reference>